<protein>
    <recommendedName>
        <fullName>Amino-acid acetyltransferase, mitochondrial</fullName>
        <ecNumber>2.3.1.1</ecNumber>
    </recommendedName>
    <alternativeName>
        <fullName>Arginine-requiring protein 2</fullName>
    </alternativeName>
    <alternativeName>
        <fullName>Glutamate N-acetyltransferase</fullName>
    </alternativeName>
    <alternativeName>
        <fullName>N-acetylglutamate synthase</fullName>
        <shortName>AGS</shortName>
        <shortName>NAGS</shortName>
    </alternativeName>
</protein>
<sequence length="621" mass="68262">MIPRAPPSTQLFSAKTAVNQRSQTFKAFYATIRSLRQPPPEPPESPQAADNDFILSILKANPSLRDTRSYLASFGVQPQRPKTLEDKKLPEIVIPPPPAPKLTASSTKVVKEEKHAPSPVINSILNPIYRRTALVKIQGPFTDVQLDSITRGLVYLEKLGMVSVIVVESDGVPKGEQEERKLLIDEIMRVVTSLEKQGAHARPIVGAVVRLGPKPGSEEESEPGFSPPETHIYPSDLTPIRSSLRAGEIPVLAPFALDSRCRSVRVDANDAIAGLACGMVEAASENPSPAAHEDGSSDSDAIDLTPLRLMIINQRGGVPSYARSGYPHLLINLQQEYDHILQTFDPRWKDSHPHALSDLALARTCLRYMPPTSSAIMVSHKSPSSLIGNLITNKPAVSSSLPHALLQGNLRLTPHTPTLLRRGLPIRVVRSVSDIDKEKMTALLEQSFGRVLDQEAFYGRLEKTLDFVIIAGDYDGTAIVTNEVCPGSSQPISYLDKFAVLPSHQGDGTVDFLWVALHDESYGLGHPFSANPNGGKGGKGEGRDLVWRSRSNNPVNKWYFERSTGHLRMGQWVLFWADAEKRLKVEESLRGSAGLSFIEDWEHGRLGKWADTITKIPSSWK</sequence>
<gene>
    <name type="primary">ARG2</name>
    <name type="ORF">CC1G_01743</name>
</gene>
<reference key="1">
    <citation type="journal article" date="2010" name="Proc. Natl. Acad. Sci. U.S.A.">
        <title>Insights into evolution of multicellular fungi from the assembled chromosomes of the mushroom Coprinopsis cinerea (Coprinus cinereus).</title>
        <authorList>
            <person name="Stajich J.E."/>
            <person name="Wilke S.K."/>
            <person name="Ahren D."/>
            <person name="Au C.H."/>
            <person name="Birren B.W."/>
            <person name="Borodovsky M."/>
            <person name="Burns C."/>
            <person name="Canbaeck B."/>
            <person name="Casselton L.A."/>
            <person name="Cheng C.K."/>
            <person name="Deng J."/>
            <person name="Dietrich F.S."/>
            <person name="Fargo D.C."/>
            <person name="Farman M.L."/>
            <person name="Gathman A.C."/>
            <person name="Goldberg J."/>
            <person name="Guigo R."/>
            <person name="Hoegger P.J."/>
            <person name="Hooker J.B."/>
            <person name="Huggins A."/>
            <person name="James T.Y."/>
            <person name="Kamada T."/>
            <person name="Kilaru S."/>
            <person name="Kodira C."/>
            <person name="Kuees U."/>
            <person name="Kupfer D."/>
            <person name="Kwan H.S."/>
            <person name="Lomsadze A."/>
            <person name="Li W."/>
            <person name="Lilly W.W."/>
            <person name="Ma L.-J."/>
            <person name="Mackey A.J."/>
            <person name="Manning G."/>
            <person name="Martin F."/>
            <person name="Muraguchi H."/>
            <person name="Natvig D.O."/>
            <person name="Palmerini H."/>
            <person name="Ramesh M.A."/>
            <person name="Rehmeyer C.J."/>
            <person name="Roe B.A."/>
            <person name="Shenoy N."/>
            <person name="Stanke M."/>
            <person name="Ter-Hovhannisyan V."/>
            <person name="Tunlid A."/>
            <person name="Velagapudi R."/>
            <person name="Vision T.J."/>
            <person name="Zeng Q."/>
            <person name="Zolan M.E."/>
            <person name="Pukkila P.J."/>
        </authorList>
    </citation>
    <scope>NUCLEOTIDE SEQUENCE [LARGE SCALE GENOMIC DNA]</scope>
    <source>
        <strain>Okayama-7 / 130 / ATCC MYA-4618 / FGSC 9003</strain>
    </source>
</reference>
<keyword id="KW-0012">Acyltransferase</keyword>
<keyword id="KW-0028">Amino-acid biosynthesis</keyword>
<keyword id="KW-0496">Mitochondrion</keyword>
<keyword id="KW-1185">Reference proteome</keyword>
<keyword id="KW-0808">Transferase</keyword>
<keyword id="KW-0809">Transit peptide</keyword>
<evidence type="ECO:0000250" key="1"/>
<evidence type="ECO:0000255" key="2"/>
<evidence type="ECO:0000255" key="3">
    <source>
        <dbReference type="PROSITE-ProRule" id="PRU00532"/>
    </source>
</evidence>
<evidence type="ECO:0000256" key="4">
    <source>
        <dbReference type="SAM" id="MobiDB-lite"/>
    </source>
</evidence>
<evidence type="ECO:0000305" key="5"/>
<feature type="transit peptide" description="Mitochondrion" evidence="2">
    <location>
        <begin position="1"/>
        <end position="77"/>
    </location>
</feature>
<feature type="chain" id="PRO_0000372560" description="Amino-acid acetyltransferase, mitochondrial">
    <location>
        <begin position="78"/>
        <end position="621"/>
    </location>
</feature>
<feature type="domain" description="N-acetyltransferase" evidence="3">
    <location>
        <begin position="424"/>
        <end position="600"/>
    </location>
</feature>
<feature type="region of interest" description="Disordered" evidence="4">
    <location>
        <begin position="213"/>
        <end position="233"/>
    </location>
</feature>
<organism>
    <name type="scientific">Coprinopsis cinerea (strain Okayama-7 / 130 / ATCC MYA-4618 / FGSC 9003)</name>
    <name type="common">Inky cap fungus</name>
    <name type="synonym">Hormographiella aspergillata</name>
    <dbReference type="NCBI Taxonomy" id="240176"/>
    <lineage>
        <taxon>Eukaryota</taxon>
        <taxon>Fungi</taxon>
        <taxon>Dikarya</taxon>
        <taxon>Basidiomycota</taxon>
        <taxon>Agaricomycotina</taxon>
        <taxon>Agaricomycetes</taxon>
        <taxon>Agaricomycetidae</taxon>
        <taxon>Agaricales</taxon>
        <taxon>Agaricineae</taxon>
        <taxon>Psathyrellaceae</taxon>
        <taxon>Coprinopsis</taxon>
    </lineage>
</organism>
<name>NAGS_COPC7</name>
<comment type="function">
    <text evidence="1">N-acetylglutamate synthase involved in arginine biosynthesis.</text>
</comment>
<comment type="catalytic activity">
    <reaction>
        <text>L-glutamate + acetyl-CoA = N-acetyl-L-glutamate + CoA + H(+)</text>
        <dbReference type="Rhea" id="RHEA:24292"/>
        <dbReference type="ChEBI" id="CHEBI:15378"/>
        <dbReference type="ChEBI" id="CHEBI:29985"/>
        <dbReference type="ChEBI" id="CHEBI:44337"/>
        <dbReference type="ChEBI" id="CHEBI:57287"/>
        <dbReference type="ChEBI" id="CHEBI:57288"/>
        <dbReference type="EC" id="2.3.1.1"/>
    </reaction>
</comment>
<comment type="pathway">
    <text>Amino-acid biosynthesis; L-arginine biosynthesis; N(2)-acetyl-L-ornithine from L-glutamate: step 1/4.</text>
</comment>
<comment type="subcellular location">
    <subcellularLocation>
        <location evidence="1">Mitochondrion</location>
    </subcellularLocation>
</comment>
<comment type="similarity">
    <text evidence="5">Belongs to the acetyltransferase family.</text>
</comment>
<accession>A8N2M6</accession>
<proteinExistence type="inferred from homology"/>
<dbReference type="EC" id="2.3.1.1"/>
<dbReference type="EMBL" id="AACS02000001">
    <property type="protein sequence ID" value="EAU92698.1"/>
    <property type="molecule type" value="Genomic_DNA"/>
</dbReference>
<dbReference type="RefSeq" id="XP_001829063.1">
    <property type="nucleotide sequence ID" value="XM_001829011.2"/>
</dbReference>
<dbReference type="SMR" id="A8N2M6"/>
<dbReference type="FunCoup" id="A8N2M6">
    <property type="interactions" value="102"/>
</dbReference>
<dbReference type="STRING" id="240176.A8N2M6"/>
<dbReference type="GeneID" id="6005489"/>
<dbReference type="KEGG" id="cci:CC1G_01743"/>
<dbReference type="VEuPathDB" id="FungiDB:CC1G_01743"/>
<dbReference type="eggNOG" id="KOG2436">
    <property type="taxonomic scope" value="Eukaryota"/>
</dbReference>
<dbReference type="HOGENOM" id="CLU_013088_0_0_1"/>
<dbReference type="InParanoid" id="A8N2M6"/>
<dbReference type="OMA" id="QASHTTF"/>
<dbReference type="OrthoDB" id="5585968at2759"/>
<dbReference type="UniPathway" id="UPA00068">
    <property type="reaction ID" value="UER00106"/>
</dbReference>
<dbReference type="Proteomes" id="UP000001861">
    <property type="component" value="Unassembled WGS sequence"/>
</dbReference>
<dbReference type="GO" id="GO:0005759">
    <property type="term" value="C:mitochondrial matrix"/>
    <property type="evidence" value="ECO:0007669"/>
    <property type="project" value="TreeGrafter"/>
</dbReference>
<dbReference type="GO" id="GO:0004042">
    <property type="term" value="F:L-glutamate N-acetyltransferase activity"/>
    <property type="evidence" value="ECO:0007669"/>
    <property type="project" value="TreeGrafter"/>
</dbReference>
<dbReference type="GO" id="GO:0006526">
    <property type="term" value="P:L-arginine biosynthetic process"/>
    <property type="evidence" value="ECO:0007669"/>
    <property type="project" value="UniProtKB-UniPathway"/>
</dbReference>
<dbReference type="GO" id="GO:0006592">
    <property type="term" value="P:ornithine biosynthetic process"/>
    <property type="evidence" value="ECO:0007669"/>
    <property type="project" value="TreeGrafter"/>
</dbReference>
<dbReference type="FunFam" id="3.40.630.30:FF:000070">
    <property type="entry name" value="Acetylglutamate kinase"/>
    <property type="match status" value="1"/>
</dbReference>
<dbReference type="Gene3D" id="3.40.630.30">
    <property type="match status" value="1"/>
</dbReference>
<dbReference type="Gene3D" id="3.40.1160.10">
    <property type="entry name" value="Acetylglutamate kinase-like"/>
    <property type="match status" value="1"/>
</dbReference>
<dbReference type="InterPro" id="IPR036393">
    <property type="entry name" value="AceGlu_kinase-like_sf"/>
</dbReference>
<dbReference type="InterPro" id="IPR006855">
    <property type="entry name" value="Vertebrate-like_GNAT_dom"/>
</dbReference>
<dbReference type="PANTHER" id="PTHR23342:SF4">
    <property type="entry name" value="AMINO-ACID ACETYLTRANSFERASE, MITOCHONDRIAL"/>
    <property type="match status" value="1"/>
</dbReference>
<dbReference type="PANTHER" id="PTHR23342">
    <property type="entry name" value="N-ACETYLGLUTAMATE SYNTHASE"/>
    <property type="match status" value="1"/>
</dbReference>
<dbReference type="Pfam" id="PF04768">
    <property type="entry name" value="NAT"/>
    <property type="match status" value="2"/>
</dbReference>
<dbReference type="PROSITE" id="PS51731">
    <property type="entry name" value="GNAT_NAGS"/>
    <property type="match status" value="1"/>
</dbReference>